<dbReference type="EC" id="2.7.1.25" evidence="1"/>
<dbReference type="EMBL" id="CP000886">
    <property type="protein sequence ID" value="ABX68988.1"/>
    <property type="molecule type" value="Genomic_DNA"/>
</dbReference>
<dbReference type="RefSeq" id="WP_001173663.1">
    <property type="nucleotide sequence ID" value="NC_010102.1"/>
</dbReference>
<dbReference type="SMR" id="A9N2D7"/>
<dbReference type="KEGG" id="spq:SPAB_03648"/>
<dbReference type="PATRIC" id="fig|1016998.12.peg.3435"/>
<dbReference type="HOGENOM" id="CLU_046932_1_0_6"/>
<dbReference type="BioCyc" id="SENT1016998:SPAB_RS14865-MONOMER"/>
<dbReference type="UniPathway" id="UPA00140">
    <property type="reaction ID" value="UER00205"/>
</dbReference>
<dbReference type="Proteomes" id="UP000008556">
    <property type="component" value="Chromosome"/>
</dbReference>
<dbReference type="GO" id="GO:0004020">
    <property type="term" value="F:adenylylsulfate kinase activity"/>
    <property type="evidence" value="ECO:0007669"/>
    <property type="project" value="UniProtKB-UniRule"/>
</dbReference>
<dbReference type="GO" id="GO:0005524">
    <property type="term" value="F:ATP binding"/>
    <property type="evidence" value="ECO:0007669"/>
    <property type="project" value="UniProtKB-UniRule"/>
</dbReference>
<dbReference type="GO" id="GO:0070814">
    <property type="term" value="P:hydrogen sulfide biosynthetic process"/>
    <property type="evidence" value="ECO:0007669"/>
    <property type="project" value="UniProtKB-UniRule"/>
</dbReference>
<dbReference type="GO" id="GO:0000103">
    <property type="term" value="P:sulfate assimilation"/>
    <property type="evidence" value="ECO:0007669"/>
    <property type="project" value="UniProtKB-UniRule"/>
</dbReference>
<dbReference type="CDD" id="cd02027">
    <property type="entry name" value="APSK"/>
    <property type="match status" value="1"/>
</dbReference>
<dbReference type="FunFam" id="3.40.50.300:FF:000212">
    <property type="entry name" value="Adenylyl-sulfate kinase"/>
    <property type="match status" value="1"/>
</dbReference>
<dbReference type="Gene3D" id="3.40.50.300">
    <property type="entry name" value="P-loop containing nucleotide triphosphate hydrolases"/>
    <property type="match status" value="1"/>
</dbReference>
<dbReference type="HAMAP" id="MF_00065">
    <property type="entry name" value="Adenylyl_sulf_kinase"/>
    <property type="match status" value="1"/>
</dbReference>
<dbReference type="InterPro" id="IPR002891">
    <property type="entry name" value="APS_kinase"/>
</dbReference>
<dbReference type="InterPro" id="IPR027417">
    <property type="entry name" value="P-loop_NTPase"/>
</dbReference>
<dbReference type="NCBIfam" id="TIGR00455">
    <property type="entry name" value="apsK"/>
    <property type="match status" value="1"/>
</dbReference>
<dbReference type="NCBIfam" id="NF003013">
    <property type="entry name" value="PRK03846.1"/>
    <property type="match status" value="1"/>
</dbReference>
<dbReference type="PANTHER" id="PTHR11055:SF63">
    <property type="entry name" value="ADENYLYL-SULFATE KINASE 1, CHLOROPLASTIC"/>
    <property type="match status" value="1"/>
</dbReference>
<dbReference type="PANTHER" id="PTHR11055">
    <property type="entry name" value="BIFUNCTIONAL 3'-PHOSPHOADENOSINE 5'-PHOSPHOSULFATE SYNTHASE"/>
    <property type="match status" value="1"/>
</dbReference>
<dbReference type="Pfam" id="PF01583">
    <property type="entry name" value="APS_kinase"/>
    <property type="match status" value="1"/>
</dbReference>
<dbReference type="SUPFAM" id="SSF52540">
    <property type="entry name" value="P-loop containing nucleoside triphosphate hydrolases"/>
    <property type="match status" value="1"/>
</dbReference>
<name>CYSC_SALPB</name>
<feature type="chain" id="PRO_1000075088" description="Adenylyl-sulfate kinase">
    <location>
        <begin position="1"/>
        <end position="201"/>
    </location>
</feature>
<feature type="active site" description="Phosphoserine intermediate" evidence="1">
    <location>
        <position position="109"/>
    </location>
</feature>
<feature type="binding site" evidence="1">
    <location>
        <begin position="35"/>
        <end position="42"/>
    </location>
    <ligand>
        <name>ATP</name>
        <dbReference type="ChEBI" id="CHEBI:30616"/>
    </ligand>
</feature>
<accession>A9N2D7</accession>
<reference key="1">
    <citation type="submission" date="2007-11" db="EMBL/GenBank/DDBJ databases">
        <authorList>
            <consortium name="The Salmonella enterica serovar Paratyphi B Genome Sequencing Project"/>
            <person name="McClelland M."/>
            <person name="Sanderson E.K."/>
            <person name="Porwollik S."/>
            <person name="Spieth J."/>
            <person name="Clifton W.S."/>
            <person name="Fulton R."/>
            <person name="Cordes M."/>
            <person name="Wollam A."/>
            <person name="Shah N."/>
            <person name="Pepin K."/>
            <person name="Bhonagiri V."/>
            <person name="Nash W."/>
            <person name="Johnson M."/>
            <person name="Thiruvilangam P."/>
            <person name="Wilson R."/>
        </authorList>
    </citation>
    <scope>NUCLEOTIDE SEQUENCE [LARGE SCALE GENOMIC DNA]</scope>
    <source>
        <strain>ATCC BAA-1250 / SPB7</strain>
    </source>
</reference>
<keyword id="KW-0067">ATP-binding</keyword>
<keyword id="KW-0418">Kinase</keyword>
<keyword id="KW-0547">Nucleotide-binding</keyword>
<keyword id="KW-0597">Phosphoprotein</keyword>
<keyword id="KW-0808">Transferase</keyword>
<gene>
    <name evidence="1" type="primary">cysC</name>
    <name type="ordered locus">SPAB_03648</name>
</gene>
<protein>
    <recommendedName>
        <fullName evidence="1">Adenylyl-sulfate kinase</fullName>
        <ecNumber evidence="1">2.7.1.25</ecNumber>
    </recommendedName>
    <alternativeName>
        <fullName evidence="1">APS kinase</fullName>
    </alternativeName>
    <alternativeName>
        <fullName evidence="1">ATP adenosine-5'-phosphosulfate 3'-phosphotransferase</fullName>
    </alternativeName>
    <alternativeName>
        <fullName evidence="1">Adenosine-5'-phosphosulfate kinase</fullName>
    </alternativeName>
</protein>
<organism>
    <name type="scientific">Salmonella paratyphi B (strain ATCC BAA-1250 / SPB7)</name>
    <dbReference type="NCBI Taxonomy" id="1016998"/>
    <lineage>
        <taxon>Bacteria</taxon>
        <taxon>Pseudomonadati</taxon>
        <taxon>Pseudomonadota</taxon>
        <taxon>Gammaproteobacteria</taxon>
        <taxon>Enterobacterales</taxon>
        <taxon>Enterobacteriaceae</taxon>
        <taxon>Salmonella</taxon>
    </lineage>
</organism>
<proteinExistence type="inferred from homology"/>
<comment type="function">
    <text evidence="1">Catalyzes the synthesis of activated sulfate.</text>
</comment>
<comment type="catalytic activity">
    <reaction evidence="1">
        <text>adenosine 5'-phosphosulfate + ATP = 3'-phosphoadenylyl sulfate + ADP + H(+)</text>
        <dbReference type="Rhea" id="RHEA:24152"/>
        <dbReference type="ChEBI" id="CHEBI:15378"/>
        <dbReference type="ChEBI" id="CHEBI:30616"/>
        <dbReference type="ChEBI" id="CHEBI:58243"/>
        <dbReference type="ChEBI" id="CHEBI:58339"/>
        <dbReference type="ChEBI" id="CHEBI:456216"/>
        <dbReference type="EC" id="2.7.1.25"/>
    </reaction>
</comment>
<comment type="pathway">
    <text evidence="1">Sulfur metabolism; hydrogen sulfide biosynthesis; sulfite from sulfate: step 2/3.</text>
</comment>
<comment type="similarity">
    <text evidence="1">Belongs to the APS kinase family.</text>
</comment>
<sequence>MALHDENVVWHSHPVTVAAREQLHGHRGVVLWFTGLSGSGKSTVAGALEEALHQRGVSTYLLDGDNVRHGLCRDLGFSDADRQENIRRVGEVASLMADAGLIVLTAFISPHRAERQLVKERVGHDRFIEIYVNTPLAICEQRDPKGLYKKARAGELRNFTGIDAIYEAPDSPQVHLNGEQLVTNLVSQLLDLLRRRDIIRS</sequence>
<evidence type="ECO:0000255" key="1">
    <source>
        <dbReference type="HAMAP-Rule" id="MF_00065"/>
    </source>
</evidence>